<dbReference type="EMBL" id="BC081914">
    <property type="protein sequence ID" value="AAH81914.1"/>
    <property type="molecule type" value="mRNA"/>
</dbReference>
<dbReference type="RefSeq" id="NP_001017511.1">
    <property type="nucleotide sequence ID" value="NM_001017511.1"/>
</dbReference>
<dbReference type="RefSeq" id="NP_001421526.1">
    <property type="nucleotide sequence ID" value="NM_001434597.1"/>
</dbReference>
<dbReference type="RefSeq" id="XP_006255780.1">
    <property type="nucleotide sequence ID" value="XM_006255718.2"/>
</dbReference>
<dbReference type="SMR" id="Q66HD2"/>
<dbReference type="FunCoup" id="Q66HD2">
    <property type="interactions" value="831"/>
</dbReference>
<dbReference type="STRING" id="10116.ENSRNOP00000068927"/>
<dbReference type="iPTMnet" id="Q66HD2"/>
<dbReference type="PhosphoSitePlus" id="Q66HD2"/>
<dbReference type="PaxDb" id="10116-ENSRNOP00000022091"/>
<dbReference type="Ensembl" id="ENSRNOT00000022091.5">
    <property type="protein sequence ID" value="ENSRNOP00000022091.2"/>
    <property type="gene ID" value="ENSRNOG00000016422.5"/>
</dbReference>
<dbReference type="GeneID" id="498957"/>
<dbReference type="KEGG" id="rno:498957"/>
<dbReference type="UCSC" id="RGD:1561366">
    <property type="organism name" value="rat"/>
</dbReference>
<dbReference type="AGR" id="RGD:1561366"/>
<dbReference type="CTD" id="79786"/>
<dbReference type="RGD" id="1561366">
    <property type="gene designation" value="Klhl36"/>
</dbReference>
<dbReference type="eggNOG" id="KOG4441">
    <property type="taxonomic scope" value="Eukaryota"/>
</dbReference>
<dbReference type="GeneTree" id="ENSGT00940000157543"/>
<dbReference type="HOGENOM" id="CLU_004253_14_3_1"/>
<dbReference type="InParanoid" id="Q66HD2"/>
<dbReference type="OMA" id="RPAEDRW"/>
<dbReference type="PhylomeDB" id="Q66HD2"/>
<dbReference type="TreeFam" id="TF328485"/>
<dbReference type="UniPathway" id="UPA00143"/>
<dbReference type="PRO" id="PR:Q66HD2"/>
<dbReference type="Proteomes" id="UP000002494">
    <property type="component" value="Chromosome 19"/>
</dbReference>
<dbReference type="Bgee" id="ENSRNOG00000016422">
    <property type="expression patterns" value="Expressed in testis and 18 other cell types or tissues"/>
</dbReference>
<dbReference type="GO" id="GO:0097602">
    <property type="term" value="F:cullin family protein binding"/>
    <property type="evidence" value="ECO:0000266"/>
    <property type="project" value="RGD"/>
</dbReference>
<dbReference type="GO" id="GO:0016567">
    <property type="term" value="P:protein ubiquitination"/>
    <property type="evidence" value="ECO:0007669"/>
    <property type="project" value="UniProtKB-UniPathway"/>
</dbReference>
<dbReference type="Gene3D" id="1.25.40.420">
    <property type="match status" value="1"/>
</dbReference>
<dbReference type="Gene3D" id="2.120.10.80">
    <property type="entry name" value="Kelch-type beta propeller"/>
    <property type="match status" value="1"/>
</dbReference>
<dbReference type="Gene3D" id="3.30.710.10">
    <property type="entry name" value="Potassium Channel Kv1.1, Chain A"/>
    <property type="match status" value="1"/>
</dbReference>
<dbReference type="InterPro" id="IPR011705">
    <property type="entry name" value="BACK"/>
</dbReference>
<dbReference type="InterPro" id="IPR056737">
    <property type="entry name" value="Beta-prop_ATRN-MKLN-like"/>
</dbReference>
<dbReference type="InterPro" id="IPR017096">
    <property type="entry name" value="BTB-kelch_protein"/>
</dbReference>
<dbReference type="InterPro" id="IPR000210">
    <property type="entry name" value="BTB/POZ_dom"/>
</dbReference>
<dbReference type="InterPro" id="IPR015915">
    <property type="entry name" value="Kelch-typ_b-propeller"/>
</dbReference>
<dbReference type="InterPro" id="IPR006652">
    <property type="entry name" value="Kelch_1"/>
</dbReference>
<dbReference type="InterPro" id="IPR011333">
    <property type="entry name" value="SKP1/BTB/POZ_sf"/>
</dbReference>
<dbReference type="PANTHER" id="PTHR45632:SF4">
    <property type="entry name" value="KELCH-LIKE PROTEIN 36"/>
    <property type="match status" value="1"/>
</dbReference>
<dbReference type="PANTHER" id="PTHR45632">
    <property type="entry name" value="LD33804P"/>
    <property type="match status" value="1"/>
</dbReference>
<dbReference type="Pfam" id="PF07707">
    <property type="entry name" value="BACK"/>
    <property type="match status" value="1"/>
</dbReference>
<dbReference type="Pfam" id="PF24981">
    <property type="entry name" value="Beta-prop_ATRN-LZTR1"/>
    <property type="match status" value="1"/>
</dbReference>
<dbReference type="Pfam" id="PF00651">
    <property type="entry name" value="BTB"/>
    <property type="match status" value="1"/>
</dbReference>
<dbReference type="PIRSF" id="PIRSF037037">
    <property type="entry name" value="Kelch-like_protein_gigaxonin"/>
    <property type="match status" value="1"/>
</dbReference>
<dbReference type="SMART" id="SM00875">
    <property type="entry name" value="BACK"/>
    <property type="match status" value="1"/>
</dbReference>
<dbReference type="SMART" id="SM00225">
    <property type="entry name" value="BTB"/>
    <property type="match status" value="1"/>
</dbReference>
<dbReference type="SMART" id="SM00612">
    <property type="entry name" value="Kelch"/>
    <property type="match status" value="6"/>
</dbReference>
<dbReference type="SUPFAM" id="SSF117281">
    <property type="entry name" value="Kelch motif"/>
    <property type="match status" value="1"/>
</dbReference>
<dbReference type="SUPFAM" id="SSF54695">
    <property type="entry name" value="POZ domain"/>
    <property type="match status" value="1"/>
</dbReference>
<dbReference type="PROSITE" id="PS50097">
    <property type="entry name" value="BTB"/>
    <property type="match status" value="1"/>
</dbReference>
<sequence length="613" mass="69935">MEASKQMRVSRPYKISESSKVYHWPGHSTTVLQRLNEQRLHGLFCDVVLVVEEQQVPAHRNLLAVCSDYFNSMFTLGMREAFQKEVELVGTSYVGLKAVVDFLYSSELELDGSNIDYILETAHLLQIWTVVDFCCEYLEQEVSEDNYLYLQELASIYSLKRLDAFIDSFVLNHFSTLSFTPDFLQTVSVQKLCIYLSSGQVQHTWEYDLLQAALQWLTQQPEREVHTCRVLENIRFPLFPEDILLQRVKLAMCSLLPSEANGEGFVEEAMHYHNSLVAQPVLQTKRTLLRSEECLLFVGGEVSERCLELSDDTCYLDTKNEQWVKETSLPARRSHHCVAVLGGFIFVAGGSFSRDNGGNAASNLLYRYDPRRKQWIKVASMNQRRVDFYLASIEDMLVAVGGRNENGALSSVETYSPKTNSWTYVAGLPRFTYGHAGTIYKDFVYISGGHDYQIGPYRKNLLCYDHRTDVWEERRPMTTARGWHSMCSLGDSIYSIGGSDDHMESMERFDVLGVEAYSPQCNQWTRVAPLLQANSESGVAVWQGRIYILGGYSWESTAFSRAVQVYDREANRWSRGPDLPNAIAGVSACVCALNPRLEEKKKKNKDKRQDRGQ</sequence>
<organism>
    <name type="scientific">Rattus norvegicus</name>
    <name type="common">Rat</name>
    <dbReference type="NCBI Taxonomy" id="10116"/>
    <lineage>
        <taxon>Eukaryota</taxon>
        <taxon>Metazoa</taxon>
        <taxon>Chordata</taxon>
        <taxon>Craniata</taxon>
        <taxon>Vertebrata</taxon>
        <taxon>Euteleostomi</taxon>
        <taxon>Mammalia</taxon>
        <taxon>Eutheria</taxon>
        <taxon>Euarchontoglires</taxon>
        <taxon>Glires</taxon>
        <taxon>Rodentia</taxon>
        <taxon>Myomorpha</taxon>
        <taxon>Muroidea</taxon>
        <taxon>Muridae</taxon>
        <taxon>Murinae</taxon>
        <taxon>Rattus</taxon>
    </lineage>
</organism>
<keyword id="KW-0880">Kelch repeat</keyword>
<keyword id="KW-1185">Reference proteome</keyword>
<keyword id="KW-0677">Repeat</keyword>
<keyword id="KW-0833">Ubl conjugation pathway</keyword>
<feature type="chain" id="PRO_0000274693" description="Kelch-like protein 36">
    <location>
        <begin position="1"/>
        <end position="613"/>
    </location>
</feature>
<feature type="domain" description="BTB" evidence="2">
    <location>
        <begin position="45"/>
        <end position="112"/>
    </location>
</feature>
<feature type="domain" description="BACK">
    <location>
        <begin position="147"/>
        <end position="249"/>
    </location>
</feature>
<feature type="repeat" description="Kelch 1">
    <location>
        <begin position="294"/>
        <end position="343"/>
    </location>
</feature>
<feature type="repeat" description="Kelch 2">
    <location>
        <begin position="344"/>
        <end position="395"/>
    </location>
</feature>
<feature type="repeat" description="Kelch 3">
    <location>
        <begin position="396"/>
        <end position="442"/>
    </location>
</feature>
<feature type="repeat" description="Kelch 4">
    <location>
        <begin position="444"/>
        <end position="491"/>
    </location>
</feature>
<feature type="repeat" description="Kelch 5">
    <location>
        <begin position="492"/>
        <end position="544"/>
    </location>
</feature>
<feature type="repeat" description="Kelch 6">
    <location>
        <begin position="545"/>
        <end position="593"/>
    </location>
</feature>
<evidence type="ECO:0000250" key="1"/>
<evidence type="ECO:0000255" key="2">
    <source>
        <dbReference type="PROSITE-ProRule" id="PRU00037"/>
    </source>
</evidence>
<comment type="function">
    <text evidence="1">Probable substrate-specific adapter of an E3 ubiquitin-protein ligase complex which mediates the ubiquitination and subsequent proteasomal degradation of target proteins.</text>
</comment>
<comment type="pathway">
    <text>Protein modification; protein ubiquitination.</text>
</comment>
<comment type="subunit">
    <text evidence="1">Interacts with CUL3.</text>
</comment>
<reference key="1">
    <citation type="journal article" date="2004" name="Genome Res.">
        <title>The status, quality, and expansion of the NIH full-length cDNA project: the Mammalian Gene Collection (MGC).</title>
        <authorList>
            <consortium name="The MGC Project Team"/>
        </authorList>
    </citation>
    <scope>NUCLEOTIDE SEQUENCE [LARGE SCALE MRNA]</scope>
    <source>
        <tissue>Testis</tissue>
    </source>
</reference>
<protein>
    <recommendedName>
        <fullName>Kelch-like protein 36</fullName>
    </recommendedName>
</protein>
<name>KLH36_RAT</name>
<accession>Q66HD2</accession>
<proteinExistence type="evidence at transcript level"/>
<gene>
    <name type="primary">Klhl36</name>
</gene>